<evidence type="ECO:0000250" key="1"/>
<evidence type="ECO:0000255" key="2"/>
<evidence type="ECO:0000305" key="3"/>
<dbReference type="EMBL" id="AL050399">
    <property type="status" value="NOT_ANNOTATED_CDS"/>
    <property type="molecule type" value="Genomic_DNA"/>
</dbReference>
<dbReference type="EMBL" id="AL161531">
    <property type="status" value="NOT_ANNOTATED_CDS"/>
    <property type="molecule type" value="Genomic_DNA"/>
</dbReference>
<dbReference type="EMBL" id="CP002687">
    <property type="protein sequence ID" value="AEE83017.1"/>
    <property type="molecule type" value="Genomic_DNA"/>
</dbReference>
<dbReference type="RefSeq" id="NP_001031619.1">
    <property type="nucleotide sequence ID" value="NM_001036542.2"/>
</dbReference>
<dbReference type="PaxDb" id="3702-AT4G11485.1"/>
<dbReference type="ProteomicsDB" id="224232"/>
<dbReference type="EnsemblPlants" id="AT4G11485.1">
    <property type="protein sequence ID" value="AT4G11485.1"/>
    <property type="gene ID" value="AT4G11485"/>
</dbReference>
<dbReference type="GeneID" id="3769998"/>
<dbReference type="Gramene" id="AT4G11485.1">
    <property type="protein sequence ID" value="AT4G11485.1"/>
    <property type="gene ID" value="AT4G11485"/>
</dbReference>
<dbReference type="KEGG" id="ath:AT4G11485"/>
<dbReference type="Araport" id="AT4G11485"/>
<dbReference type="TAIR" id="AT4G11485">
    <property type="gene designation" value="LCR11"/>
</dbReference>
<dbReference type="HOGENOM" id="CLU_185543_0_0_1"/>
<dbReference type="InParanoid" id="P82726"/>
<dbReference type="OMA" id="LCTSLCE"/>
<dbReference type="OrthoDB" id="10309068at2759"/>
<dbReference type="PhylomeDB" id="P82726"/>
<dbReference type="PRO" id="PR:P82726"/>
<dbReference type="Proteomes" id="UP000006548">
    <property type="component" value="Chromosome 4"/>
</dbReference>
<dbReference type="ExpressionAtlas" id="P82726">
    <property type="expression patterns" value="baseline and differential"/>
</dbReference>
<dbReference type="GO" id="GO:0005576">
    <property type="term" value="C:extracellular region"/>
    <property type="evidence" value="ECO:0007669"/>
    <property type="project" value="UniProtKB-SubCell"/>
</dbReference>
<dbReference type="GO" id="GO:0050832">
    <property type="term" value="P:defense response to fungus"/>
    <property type="evidence" value="ECO:0007669"/>
    <property type="project" value="UniProtKB-KW"/>
</dbReference>
<dbReference type="GO" id="GO:0031640">
    <property type="term" value="P:killing of cells of another organism"/>
    <property type="evidence" value="ECO:0007669"/>
    <property type="project" value="UniProtKB-KW"/>
</dbReference>
<dbReference type="InterPro" id="IPR010851">
    <property type="entry name" value="DEFL"/>
</dbReference>
<dbReference type="PANTHER" id="PTHR34783">
    <property type="entry name" value="DEFENSIN-LIKE PROTEIN 144-RELATED"/>
    <property type="match status" value="1"/>
</dbReference>
<dbReference type="PANTHER" id="PTHR34783:SF1">
    <property type="entry name" value="DEFENSIN-LIKE PROTEIN 144-RELATED"/>
    <property type="match status" value="1"/>
</dbReference>
<dbReference type="Pfam" id="PF07333">
    <property type="entry name" value="SLR1-BP"/>
    <property type="match status" value="1"/>
</dbReference>
<accession>P82726</accession>
<keyword id="KW-0929">Antimicrobial</keyword>
<keyword id="KW-1015">Disulfide bond</keyword>
<keyword id="KW-0295">Fungicide</keyword>
<keyword id="KW-0611">Plant defense</keyword>
<keyword id="KW-1185">Reference proteome</keyword>
<keyword id="KW-0964">Secreted</keyword>
<keyword id="KW-0732">Signal</keyword>
<proteinExistence type="inferred from homology"/>
<feature type="signal peptide" evidence="2">
    <location>
        <begin position="1"/>
        <end position="29"/>
    </location>
</feature>
<feature type="chain" id="PRO_0000017253" description="Putative defensin-like protein 152">
    <location>
        <begin position="30"/>
        <end position="102"/>
    </location>
</feature>
<feature type="disulfide bond" evidence="1">
    <location>
        <begin position="34"/>
        <end position="93"/>
    </location>
</feature>
<feature type="disulfide bond" evidence="1">
    <location>
        <begin position="51"/>
        <end position="71"/>
    </location>
</feature>
<feature type="disulfide bond" evidence="1">
    <location>
        <begin position="56"/>
        <end position="87"/>
    </location>
</feature>
<feature type="disulfide bond" evidence="1">
    <location>
        <begin position="60"/>
        <end position="89"/>
    </location>
</feature>
<name>DF152_ARATH</name>
<comment type="subcellular location">
    <subcellularLocation>
        <location evidence="1">Secreted</location>
    </subcellularLocation>
</comment>
<comment type="similarity">
    <text evidence="3">Belongs to the DEFL family.</text>
</comment>
<protein>
    <recommendedName>
        <fullName>Putative defensin-like protein 152</fullName>
    </recommendedName>
    <alternativeName>
        <fullName>Putative low-molecular-weight cysteine-rich protein 11</fullName>
        <shortName>Protein LCR11</shortName>
    </alternativeName>
</protein>
<organism evidence="3">
    <name type="scientific">Arabidopsis thaliana</name>
    <name type="common">Mouse-ear cress</name>
    <dbReference type="NCBI Taxonomy" id="3702"/>
    <lineage>
        <taxon>Eukaryota</taxon>
        <taxon>Viridiplantae</taxon>
        <taxon>Streptophyta</taxon>
        <taxon>Embryophyta</taxon>
        <taxon>Tracheophyta</taxon>
        <taxon>Spermatophyta</taxon>
        <taxon>Magnoliopsida</taxon>
        <taxon>eudicotyledons</taxon>
        <taxon>Gunneridae</taxon>
        <taxon>Pentapetalae</taxon>
        <taxon>rosids</taxon>
        <taxon>malvids</taxon>
        <taxon>Brassicales</taxon>
        <taxon>Brassicaceae</taxon>
        <taxon>Camelineae</taxon>
        <taxon>Arabidopsis</taxon>
    </lineage>
</organism>
<gene>
    <name type="primary">LCR11</name>
    <name type="ordered locus">At4g11485</name>
    <name type="ORF">F25E4</name>
</gene>
<sequence>MKKASQLSTTILTIFIVLAIGMMVKGTVGKQRLCIKVLTNASHVSKGASTCDSKLCTSLCEKISPQGVSFCKPIATTGQSKKGNPVCNCRYWCRSDGTPHTT</sequence>
<reference evidence="3" key="1">
    <citation type="journal article" date="1999" name="Nature">
        <title>Sequence and analysis of chromosome 4 of the plant Arabidopsis thaliana.</title>
        <authorList>
            <person name="Mayer K.F.X."/>
            <person name="Schueller C."/>
            <person name="Wambutt R."/>
            <person name="Murphy G."/>
            <person name="Volckaert G."/>
            <person name="Pohl T."/>
            <person name="Duesterhoeft A."/>
            <person name="Stiekema W."/>
            <person name="Entian K.-D."/>
            <person name="Terryn N."/>
            <person name="Harris B."/>
            <person name="Ansorge W."/>
            <person name="Brandt P."/>
            <person name="Grivell L.A."/>
            <person name="Rieger M."/>
            <person name="Weichselgartner M."/>
            <person name="de Simone V."/>
            <person name="Obermaier B."/>
            <person name="Mache R."/>
            <person name="Mueller M."/>
            <person name="Kreis M."/>
            <person name="Delseny M."/>
            <person name="Puigdomenech P."/>
            <person name="Watson M."/>
            <person name="Schmidtheini T."/>
            <person name="Reichert B."/>
            <person name="Portetelle D."/>
            <person name="Perez-Alonso M."/>
            <person name="Boutry M."/>
            <person name="Bancroft I."/>
            <person name="Vos P."/>
            <person name="Hoheisel J."/>
            <person name="Zimmermann W."/>
            <person name="Wedler H."/>
            <person name="Ridley P."/>
            <person name="Langham S.-A."/>
            <person name="McCullagh B."/>
            <person name="Bilham L."/>
            <person name="Robben J."/>
            <person name="van der Schueren J."/>
            <person name="Grymonprez B."/>
            <person name="Chuang Y.-J."/>
            <person name="Vandenbussche F."/>
            <person name="Braeken M."/>
            <person name="Weltjens I."/>
            <person name="Voet M."/>
            <person name="Bastiaens I."/>
            <person name="Aert R."/>
            <person name="Defoor E."/>
            <person name="Weitzenegger T."/>
            <person name="Bothe G."/>
            <person name="Ramsperger U."/>
            <person name="Hilbert H."/>
            <person name="Braun M."/>
            <person name="Holzer E."/>
            <person name="Brandt A."/>
            <person name="Peters S."/>
            <person name="van Staveren M."/>
            <person name="Dirkse W."/>
            <person name="Mooijman P."/>
            <person name="Klein Lankhorst R."/>
            <person name="Rose M."/>
            <person name="Hauf J."/>
            <person name="Koetter P."/>
            <person name="Berneiser S."/>
            <person name="Hempel S."/>
            <person name="Feldpausch M."/>
            <person name="Lamberth S."/>
            <person name="Van den Daele H."/>
            <person name="De Keyser A."/>
            <person name="Buysshaert C."/>
            <person name="Gielen J."/>
            <person name="Villarroel R."/>
            <person name="De Clercq R."/>
            <person name="van Montagu M."/>
            <person name="Rogers J."/>
            <person name="Cronin A."/>
            <person name="Quail M.A."/>
            <person name="Bray-Allen S."/>
            <person name="Clark L."/>
            <person name="Doggett J."/>
            <person name="Hall S."/>
            <person name="Kay M."/>
            <person name="Lennard N."/>
            <person name="McLay K."/>
            <person name="Mayes R."/>
            <person name="Pettett A."/>
            <person name="Rajandream M.A."/>
            <person name="Lyne M."/>
            <person name="Benes V."/>
            <person name="Rechmann S."/>
            <person name="Borkova D."/>
            <person name="Bloecker H."/>
            <person name="Scharfe M."/>
            <person name="Grimm M."/>
            <person name="Loehnert T.-H."/>
            <person name="Dose S."/>
            <person name="de Haan M."/>
            <person name="Maarse A.C."/>
            <person name="Schaefer M."/>
            <person name="Mueller-Auer S."/>
            <person name="Gabel C."/>
            <person name="Fuchs M."/>
            <person name="Fartmann B."/>
            <person name="Granderath K."/>
            <person name="Dauner D."/>
            <person name="Herzl A."/>
            <person name="Neumann S."/>
            <person name="Argiriou A."/>
            <person name="Vitale D."/>
            <person name="Liguori R."/>
            <person name="Piravandi E."/>
            <person name="Massenet O."/>
            <person name="Quigley F."/>
            <person name="Clabauld G."/>
            <person name="Muendlein A."/>
            <person name="Felber R."/>
            <person name="Schnabl S."/>
            <person name="Hiller R."/>
            <person name="Schmidt W."/>
            <person name="Lecharny A."/>
            <person name="Aubourg S."/>
            <person name="Chefdor F."/>
            <person name="Cooke R."/>
            <person name="Berger C."/>
            <person name="Monfort A."/>
            <person name="Casacuberta E."/>
            <person name="Gibbons T."/>
            <person name="Weber N."/>
            <person name="Vandenbol M."/>
            <person name="Bargues M."/>
            <person name="Terol J."/>
            <person name="Torres A."/>
            <person name="Perez-Perez A."/>
            <person name="Purnelle B."/>
            <person name="Bent E."/>
            <person name="Johnson S."/>
            <person name="Tacon D."/>
            <person name="Jesse T."/>
            <person name="Heijnen L."/>
            <person name="Schwarz S."/>
            <person name="Scholler P."/>
            <person name="Heber S."/>
            <person name="Francs P."/>
            <person name="Bielke C."/>
            <person name="Frishman D."/>
            <person name="Haase D."/>
            <person name="Lemcke K."/>
            <person name="Mewes H.-W."/>
            <person name="Stocker S."/>
            <person name="Zaccaria P."/>
            <person name="Bevan M."/>
            <person name="Wilson R.K."/>
            <person name="de la Bastide M."/>
            <person name="Habermann K."/>
            <person name="Parnell L."/>
            <person name="Dedhia N."/>
            <person name="Gnoj L."/>
            <person name="Schutz K."/>
            <person name="Huang E."/>
            <person name="Spiegel L."/>
            <person name="Sekhon M."/>
            <person name="Murray J."/>
            <person name="Sheet P."/>
            <person name="Cordes M."/>
            <person name="Abu-Threideh J."/>
            <person name="Stoneking T."/>
            <person name="Kalicki J."/>
            <person name="Graves T."/>
            <person name="Harmon G."/>
            <person name="Edwards J."/>
            <person name="Latreille P."/>
            <person name="Courtney L."/>
            <person name="Cloud J."/>
            <person name="Abbott A."/>
            <person name="Scott K."/>
            <person name="Johnson D."/>
            <person name="Minx P."/>
            <person name="Bentley D."/>
            <person name="Fulton B."/>
            <person name="Miller N."/>
            <person name="Greco T."/>
            <person name="Kemp K."/>
            <person name="Kramer J."/>
            <person name="Fulton L."/>
            <person name="Mardis E."/>
            <person name="Dante M."/>
            <person name="Pepin K."/>
            <person name="Hillier L.W."/>
            <person name="Nelson J."/>
            <person name="Spieth J."/>
            <person name="Ryan E."/>
            <person name="Andrews S."/>
            <person name="Geisel C."/>
            <person name="Layman D."/>
            <person name="Du H."/>
            <person name="Ali J."/>
            <person name="Berghoff A."/>
            <person name="Jones K."/>
            <person name="Drone K."/>
            <person name="Cotton M."/>
            <person name="Joshu C."/>
            <person name="Antonoiu B."/>
            <person name="Zidanic M."/>
            <person name="Strong C."/>
            <person name="Sun H."/>
            <person name="Lamar B."/>
            <person name="Yordan C."/>
            <person name="Ma P."/>
            <person name="Zhong J."/>
            <person name="Preston R."/>
            <person name="Vil D."/>
            <person name="Shekher M."/>
            <person name="Matero A."/>
            <person name="Shah R."/>
            <person name="Swaby I.K."/>
            <person name="O'Shaughnessy A."/>
            <person name="Rodriguez M."/>
            <person name="Hoffman J."/>
            <person name="Till S."/>
            <person name="Granat S."/>
            <person name="Shohdy N."/>
            <person name="Hasegawa A."/>
            <person name="Hameed A."/>
            <person name="Lodhi M."/>
            <person name="Johnson A."/>
            <person name="Chen E."/>
            <person name="Marra M.A."/>
            <person name="Martienssen R."/>
            <person name="McCombie W.R."/>
        </authorList>
    </citation>
    <scope>NUCLEOTIDE SEQUENCE [LARGE SCALE GENOMIC DNA]</scope>
    <source>
        <strain>cv. Columbia</strain>
    </source>
</reference>
<reference key="2">
    <citation type="journal article" date="2017" name="Plant J.">
        <title>Araport11: a complete reannotation of the Arabidopsis thaliana reference genome.</title>
        <authorList>
            <person name="Cheng C.Y."/>
            <person name="Krishnakumar V."/>
            <person name="Chan A.P."/>
            <person name="Thibaud-Nissen F."/>
            <person name="Schobel S."/>
            <person name="Town C.D."/>
        </authorList>
    </citation>
    <scope>GENOME REANNOTATION</scope>
    <source>
        <strain>cv. Columbia</strain>
    </source>
</reference>
<reference evidence="3" key="3">
    <citation type="journal article" date="2001" name="Plant Mol. Biol.">
        <title>Two large Arabidopsis thaliana gene families are homologous to the Brassica gene superfamily that encodes pollen coat proteins and the male component of the self-incompatibility response.</title>
        <authorList>
            <person name="Vanoosthuyse V."/>
            <person name="Miege C."/>
            <person name="Dumas C."/>
            <person name="Cock J.M."/>
        </authorList>
    </citation>
    <scope>IDENTIFICATION</scope>
</reference>
<reference key="4">
    <citation type="journal article" date="2005" name="Plant Physiol.">
        <title>Genome organization of more than 300 defensin-like genes in Arabidopsis.</title>
        <authorList>
            <person name="Silverstein K.A.T."/>
            <person name="Graham M.A."/>
            <person name="Paape T.D."/>
            <person name="VandenBosch K.A."/>
        </authorList>
    </citation>
    <scope>GENE FAMILY</scope>
</reference>